<gene>
    <name evidence="1" type="primary">plsX</name>
    <name type="ordered locus">STM1192</name>
</gene>
<feature type="chain" id="PRO_0000189931" description="Phosphate acyltransferase">
    <location>
        <begin position="1"/>
        <end position="359"/>
    </location>
</feature>
<organism>
    <name type="scientific">Salmonella typhimurium (strain LT2 / SGSC1412 / ATCC 700720)</name>
    <dbReference type="NCBI Taxonomy" id="99287"/>
    <lineage>
        <taxon>Bacteria</taxon>
        <taxon>Pseudomonadati</taxon>
        <taxon>Pseudomonadota</taxon>
        <taxon>Gammaproteobacteria</taxon>
        <taxon>Enterobacterales</taxon>
        <taxon>Enterobacteriaceae</taxon>
        <taxon>Salmonella</taxon>
    </lineage>
</organism>
<sequence length="359" mass="38716">MTRLTLALDVMGGDFGPSVTVPAALQALNANSQLTLLLVGNPDIITPLLAKADFEQRSRLQIIPAQSVIASDARPSQAIRASRGTSMRVALELVKEGRAEACVSAGNTGALMGLAKLLLKPLEGIERPALVTVLPHQQKGKTVVLDLGANVDCDSTMLVQFAVMGAVLAEEVVGIKNPRVALLNIGEEETKGLDSIREASLMLKTVPTINYIGYLEANELLTGKTDVLVCDGFTGNVTLKTMEGVVRMFLSLLKSQGEGKKRSWWLLLLKRWLQKSLTRRFSHLNPDQYNGACLLGLRGTVIKSHGAANQRAFAVAIEQAVQAVQRQVPQRIAARLESVYPAGFEPLDDGKGVNLRAHR</sequence>
<protein>
    <recommendedName>
        <fullName evidence="1">Phosphate acyltransferase</fullName>
        <ecNumber evidence="1">2.3.1.274</ecNumber>
    </recommendedName>
    <alternativeName>
        <fullName evidence="1">Acyl-ACP phosphotransacylase</fullName>
    </alternativeName>
    <alternativeName>
        <fullName evidence="1">Acyl-[acyl-carrier-protein]--phosphate acyltransferase</fullName>
    </alternativeName>
    <alternativeName>
        <fullName evidence="1">Phosphate-acyl-ACP acyltransferase</fullName>
    </alternativeName>
</protein>
<evidence type="ECO:0000255" key="1">
    <source>
        <dbReference type="HAMAP-Rule" id="MF_00019"/>
    </source>
</evidence>
<evidence type="ECO:0000305" key="2"/>
<proteinExistence type="inferred from homology"/>
<keyword id="KW-0963">Cytoplasm</keyword>
<keyword id="KW-0444">Lipid biosynthesis</keyword>
<keyword id="KW-0443">Lipid metabolism</keyword>
<keyword id="KW-0594">Phospholipid biosynthesis</keyword>
<keyword id="KW-1208">Phospholipid metabolism</keyword>
<keyword id="KW-1185">Reference proteome</keyword>
<keyword id="KW-0808">Transferase</keyword>
<name>PLSX_SALTY</name>
<reference key="1">
    <citation type="journal article" date="1998" name="J. Bacteriol.">
        <title>Transcriptional analysis of essential genes of the Escherichia coli fatty acid biosynthesis gene cluster by functional replacement with the analogous Salmonella typhimurium gene cluster.</title>
        <authorList>
            <person name="Zhang Y."/>
            <person name="Cronan J.E. Jr."/>
        </authorList>
    </citation>
    <scope>NUCLEOTIDE SEQUENCE [GENOMIC DNA]</scope>
    <source>
        <strain>LT2</strain>
    </source>
</reference>
<reference key="2">
    <citation type="journal article" date="2001" name="Nature">
        <title>Complete genome sequence of Salmonella enterica serovar Typhimurium LT2.</title>
        <authorList>
            <person name="McClelland M."/>
            <person name="Sanderson K.E."/>
            <person name="Spieth J."/>
            <person name="Clifton S.W."/>
            <person name="Latreille P."/>
            <person name="Courtney L."/>
            <person name="Porwollik S."/>
            <person name="Ali J."/>
            <person name="Dante M."/>
            <person name="Du F."/>
            <person name="Hou S."/>
            <person name="Layman D."/>
            <person name="Leonard S."/>
            <person name="Nguyen C."/>
            <person name="Scott K."/>
            <person name="Holmes A."/>
            <person name="Grewal N."/>
            <person name="Mulvaney E."/>
            <person name="Ryan E."/>
            <person name="Sun H."/>
            <person name="Florea L."/>
            <person name="Miller W."/>
            <person name="Stoneking T."/>
            <person name="Nhan M."/>
            <person name="Waterston R."/>
            <person name="Wilson R.K."/>
        </authorList>
    </citation>
    <scope>NUCLEOTIDE SEQUENCE [LARGE SCALE GENOMIC DNA]</scope>
    <source>
        <strain>LT2 / SGSC1412 / ATCC 700720</strain>
    </source>
</reference>
<comment type="function">
    <text evidence="1">Catalyzes the reversible formation of acyl-phosphate (acyl-PO(4)) from acyl-[acyl-carrier-protein] (acyl-ACP). This enzyme utilizes acyl-ACP as fatty acyl donor, but not acyl-CoA.</text>
</comment>
<comment type="catalytic activity">
    <reaction evidence="1">
        <text>a fatty acyl-[ACP] + phosphate = an acyl phosphate + holo-[ACP]</text>
        <dbReference type="Rhea" id="RHEA:42292"/>
        <dbReference type="Rhea" id="RHEA-COMP:9685"/>
        <dbReference type="Rhea" id="RHEA-COMP:14125"/>
        <dbReference type="ChEBI" id="CHEBI:43474"/>
        <dbReference type="ChEBI" id="CHEBI:59918"/>
        <dbReference type="ChEBI" id="CHEBI:64479"/>
        <dbReference type="ChEBI" id="CHEBI:138651"/>
        <dbReference type="EC" id="2.3.1.274"/>
    </reaction>
</comment>
<comment type="pathway">
    <text evidence="1">Lipid metabolism; phospholipid metabolism.</text>
</comment>
<comment type="subunit">
    <text evidence="1">Homodimer. Probably interacts with PlsY.</text>
</comment>
<comment type="subcellular location">
    <subcellularLocation>
        <location evidence="1">Cytoplasm</location>
    </subcellularLocation>
    <text evidence="1">Associated with the membrane possibly through PlsY.</text>
</comment>
<comment type="similarity">
    <text evidence="1">Belongs to the PlsX family.</text>
</comment>
<comment type="sequence caution" evidence="2">
    <conflict type="erroneous initiation">
        <sequence resource="EMBL-CDS" id="AAC38647"/>
    </conflict>
</comment>
<dbReference type="EC" id="2.3.1.274" evidence="1"/>
<dbReference type="EMBL" id="AF044668">
    <property type="protein sequence ID" value="AAC38647.1"/>
    <property type="status" value="ALT_INIT"/>
    <property type="molecule type" value="Genomic_DNA"/>
</dbReference>
<dbReference type="EMBL" id="AE006468">
    <property type="protein sequence ID" value="AAL20121.1"/>
    <property type="molecule type" value="Genomic_DNA"/>
</dbReference>
<dbReference type="RefSeq" id="NP_460162.1">
    <property type="nucleotide sequence ID" value="NC_003197.2"/>
</dbReference>
<dbReference type="RefSeq" id="WP_001518286.1">
    <property type="nucleotide sequence ID" value="NC_003197.2"/>
</dbReference>
<dbReference type="SMR" id="P0A259"/>
<dbReference type="STRING" id="99287.STM1192"/>
<dbReference type="PaxDb" id="99287-STM1192"/>
<dbReference type="GeneID" id="1252710"/>
<dbReference type="KEGG" id="stm:STM1192"/>
<dbReference type="PATRIC" id="fig|99287.12.peg.1261"/>
<dbReference type="HOGENOM" id="CLU_039379_1_0_6"/>
<dbReference type="OMA" id="HGKSNAR"/>
<dbReference type="PhylomeDB" id="P0A259"/>
<dbReference type="BioCyc" id="SENT99287:STM1192-MONOMER"/>
<dbReference type="UniPathway" id="UPA00085"/>
<dbReference type="Proteomes" id="UP000001014">
    <property type="component" value="Chromosome"/>
</dbReference>
<dbReference type="GO" id="GO:0005737">
    <property type="term" value="C:cytoplasm"/>
    <property type="evidence" value="ECO:0007669"/>
    <property type="project" value="UniProtKB-SubCell"/>
</dbReference>
<dbReference type="GO" id="GO:0043811">
    <property type="term" value="F:phosphate:acyl-[acyl carrier protein] acyltransferase activity"/>
    <property type="evidence" value="ECO:0007669"/>
    <property type="project" value="UniProtKB-UniRule"/>
</dbReference>
<dbReference type="GO" id="GO:0006633">
    <property type="term" value="P:fatty acid biosynthetic process"/>
    <property type="evidence" value="ECO:0007669"/>
    <property type="project" value="UniProtKB-UniRule"/>
</dbReference>
<dbReference type="GO" id="GO:0008654">
    <property type="term" value="P:phospholipid biosynthetic process"/>
    <property type="evidence" value="ECO:0007669"/>
    <property type="project" value="UniProtKB-KW"/>
</dbReference>
<dbReference type="FunFam" id="3.40.718.10:FF:000008">
    <property type="entry name" value="Phosphate acyltransferase"/>
    <property type="match status" value="1"/>
</dbReference>
<dbReference type="Gene3D" id="3.40.718.10">
    <property type="entry name" value="Isopropylmalate Dehydrogenase"/>
    <property type="match status" value="1"/>
</dbReference>
<dbReference type="HAMAP" id="MF_00019">
    <property type="entry name" value="PlsX"/>
    <property type="match status" value="1"/>
</dbReference>
<dbReference type="InterPro" id="IPR003664">
    <property type="entry name" value="FA_synthesis"/>
</dbReference>
<dbReference type="InterPro" id="IPR012281">
    <property type="entry name" value="Phospholipid_synth_PlsX-like"/>
</dbReference>
<dbReference type="NCBIfam" id="TIGR00182">
    <property type="entry name" value="plsX"/>
    <property type="match status" value="1"/>
</dbReference>
<dbReference type="PANTHER" id="PTHR30100">
    <property type="entry name" value="FATTY ACID/PHOSPHOLIPID SYNTHESIS PROTEIN PLSX"/>
    <property type="match status" value="1"/>
</dbReference>
<dbReference type="PANTHER" id="PTHR30100:SF1">
    <property type="entry name" value="PHOSPHATE ACYLTRANSFERASE"/>
    <property type="match status" value="1"/>
</dbReference>
<dbReference type="Pfam" id="PF02504">
    <property type="entry name" value="FA_synthesis"/>
    <property type="match status" value="1"/>
</dbReference>
<dbReference type="PIRSF" id="PIRSF002465">
    <property type="entry name" value="Phsphlp_syn_PlsX"/>
    <property type="match status" value="1"/>
</dbReference>
<dbReference type="SUPFAM" id="SSF53659">
    <property type="entry name" value="Isocitrate/Isopropylmalate dehydrogenase-like"/>
    <property type="match status" value="1"/>
</dbReference>
<accession>P0A259</accession>
<accession>O85138</accession>